<accession>P69232</accession>
<accession>O47432</accession>
<accession>O79423</accession>
<sequence length="167" mass="18731">MQMMLMFLLLLAAIMVIRATSPYYGALATAWLALLAALLLLDADIIFPAIILMLIYLGGMLVVFIYSTAYAADLMPLPINLTMSALMASFGVMLITMISSPSIETLCETKPWLVYDMQPSYMLFDIYQRGSSMFIVAVMILTALLFSILEVVSHRQTTMKWFIHSTY</sequence>
<name>NU6M_BRAFL</name>
<protein>
    <recommendedName>
        <fullName>NADH-ubiquinone oxidoreductase chain 6</fullName>
        <ecNumber>7.1.1.2</ecNumber>
    </recommendedName>
    <alternativeName>
        <fullName>NADH dehydrogenase subunit 6</fullName>
    </alternativeName>
</protein>
<organism>
    <name type="scientific">Branchiostoma floridae</name>
    <name type="common">Florida lancelet</name>
    <name type="synonym">Amphioxus</name>
    <dbReference type="NCBI Taxonomy" id="7739"/>
    <lineage>
        <taxon>Eukaryota</taxon>
        <taxon>Metazoa</taxon>
        <taxon>Chordata</taxon>
        <taxon>Cephalochordata</taxon>
        <taxon>Leptocardii</taxon>
        <taxon>Amphioxiformes</taxon>
        <taxon>Branchiostomatidae</taxon>
        <taxon>Branchiostoma</taxon>
    </lineage>
</organism>
<proteinExistence type="inferred from homology"/>
<gene>
    <name type="primary">ND6</name>
    <name type="synonym">NAD6</name>
    <name type="synonym">NADH6</name>
</gene>
<reference key="1">
    <citation type="journal article" date="1999" name="Mol. Biol. Evol.">
        <title>Complete sequence, gene arrangement, and genetic code of mitochondrial DNA of the cephalochordate Branchiostoma floridae (Amphioxus).</title>
        <authorList>
            <person name="Boore J.L."/>
            <person name="Daehler L.L."/>
            <person name="Brown W.M."/>
        </authorList>
    </citation>
    <scope>NUCLEOTIDE SEQUENCE [LARGE SCALE GENOMIC DNA]</scope>
    <source>
        <strain evidence="4">S238N-H82</strain>
    </source>
</reference>
<geneLocation type="mitochondrion"/>
<comment type="function">
    <text evidence="1">Core subunit of the mitochondrial membrane respiratory chain NADH dehydrogenase (Complex I) that is believed to belong to the minimal assembly required for catalysis. Complex I functions in the transfer of electrons from NADH to the respiratory chain. The immediate electron acceptor for the enzyme is believed to be ubiquinone (By similarity).</text>
</comment>
<comment type="catalytic activity">
    <reaction>
        <text>a ubiquinone + NADH + 5 H(+)(in) = a ubiquinol + NAD(+) + 4 H(+)(out)</text>
        <dbReference type="Rhea" id="RHEA:29091"/>
        <dbReference type="Rhea" id="RHEA-COMP:9565"/>
        <dbReference type="Rhea" id="RHEA-COMP:9566"/>
        <dbReference type="ChEBI" id="CHEBI:15378"/>
        <dbReference type="ChEBI" id="CHEBI:16389"/>
        <dbReference type="ChEBI" id="CHEBI:17976"/>
        <dbReference type="ChEBI" id="CHEBI:57540"/>
        <dbReference type="ChEBI" id="CHEBI:57945"/>
        <dbReference type="EC" id="7.1.1.2"/>
    </reaction>
</comment>
<comment type="subcellular location">
    <subcellularLocation>
        <location evidence="3">Mitochondrion membrane</location>
        <topology evidence="3">Multi-pass membrane protein</topology>
    </subcellularLocation>
</comment>
<comment type="similarity">
    <text evidence="3">Belongs to the complex I subunit 6 family.</text>
</comment>
<dbReference type="EC" id="7.1.1.2"/>
<dbReference type="EMBL" id="AF098298">
    <property type="protein sequence ID" value="AAB88001.2"/>
    <property type="molecule type" value="Genomic_DNA"/>
</dbReference>
<dbReference type="RefSeq" id="NP_007766.1">
    <property type="nucleotide sequence ID" value="NC_000834.1"/>
</dbReference>
<dbReference type="GeneID" id="808735"/>
<dbReference type="KEGG" id="bfo:808735"/>
<dbReference type="CTD" id="4541"/>
<dbReference type="InParanoid" id="P69232"/>
<dbReference type="OrthoDB" id="10522088at2759"/>
<dbReference type="Proteomes" id="UP000001554">
    <property type="component" value="Mitochondrion MT"/>
</dbReference>
<dbReference type="GO" id="GO:0031966">
    <property type="term" value="C:mitochondrial membrane"/>
    <property type="evidence" value="ECO:0007669"/>
    <property type="project" value="UniProtKB-SubCell"/>
</dbReference>
<dbReference type="GO" id="GO:0005739">
    <property type="term" value="C:mitochondrion"/>
    <property type="evidence" value="ECO:0000318"/>
    <property type="project" value="GO_Central"/>
</dbReference>
<dbReference type="GO" id="GO:0008137">
    <property type="term" value="F:NADH dehydrogenase (ubiquinone) activity"/>
    <property type="evidence" value="ECO:0007669"/>
    <property type="project" value="UniProtKB-EC"/>
</dbReference>
<dbReference type="InterPro" id="IPR050269">
    <property type="entry name" value="ComplexI_Subunit6"/>
</dbReference>
<dbReference type="PANTHER" id="PTHR11435">
    <property type="entry name" value="NADH UBIQUINONE OXIDOREDUCTASE SUBUNIT ND6"/>
    <property type="match status" value="1"/>
</dbReference>
<dbReference type="PANTHER" id="PTHR11435:SF1">
    <property type="entry name" value="NADH-UBIQUINONE OXIDOREDUCTASE CHAIN 6"/>
    <property type="match status" value="1"/>
</dbReference>
<keyword id="KW-0249">Electron transport</keyword>
<keyword id="KW-0472">Membrane</keyword>
<keyword id="KW-0496">Mitochondrion</keyword>
<keyword id="KW-0520">NAD</keyword>
<keyword id="KW-1185">Reference proteome</keyword>
<keyword id="KW-0679">Respiratory chain</keyword>
<keyword id="KW-1278">Translocase</keyword>
<keyword id="KW-0812">Transmembrane</keyword>
<keyword id="KW-1133">Transmembrane helix</keyword>
<keyword id="KW-0813">Transport</keyword>
<keyword id="KW-0830">Ubiquinone</keyword>
<feature type="chain" id="PRO_0000118252" description="NADH-ubiquinone oxidoreductase chain 6">
    <location>
        <begin position="1"/>
        <end position="167"/>
    </location>
</feature>
<feature type="transmembrane region" description="Helical" evidence="2">
    <location>
        <begin position="21"/>
        <end position="41"/>
    </location>
</feature>
<feature type="transmembrane region" description="Helical" evidence="2">
    <location>
        <begin position="45"/>
        <end position="65"/>
    </location>
</feature>
<feature type="transmembrane region" description="Helical" evidence="2">
    <location>
        <begin position="78"/>
        <end position="98"/>
    </location>
</feature>
<feature type="transmembrane region" description="Helical" evidence="2">
    <location>
        <begin position="132"/>
        <end position="152"/>
    </location>
</feature>
<evidence type="ECO:0000250" key="1"/>
<evidence type="ECO:0000255" key="2"/>
<evidence type="ECO:0000305" key="3"/>
<evidence type="ECO:0000312" key="4">
    <source>
        <dbReference type="Proteomes" id="UP000001554"/>
    </source>
</evidence>